<gene>
    <name evidence="1" type="primary">rnz</name>
    <name type="ordered locus">SPN23F06100</name>
</gene>
<evidence type="ECO:0000255" key="1">
    <source>
        <dbReference type="HAMAP-Rule" id="MF_01818"/>
    </source>
</evidence>
<proteinExistence type="inferred from homology"/>
<dbReference type="EC" id="3.1.26.11" evidence="1"/>
<dbReference type="EMBL" id="FM211187">
    <property type="protein sequence ID" value="CAR68459.1"/>
    <property type="molecule type" value="Genomic_DNA"/>
</dbReference>
<dbReference type="RefSeq" id="WP_000354338.1">
    <property type="nucleotide sequence ID" value="NC_011900.1"/>
</dbReference>
<dbReference type="SMR" id="B8ZMQ6"/>
<dbReference type="KEGG" id="sne:SPN23F06100"/>
<dbReference type="HOGENOM" id="CLU_031317_2_0_9"/>
<dbReference type="GO" id="GO:0042781">
    <property type="term" value="F:3'-tRNA processing endoribonuclease activity"/>
    <property type="evidence" value="ECO:0007669"/>
    <property type="project" value="UniProtKB-UniRule"/>
</dbReference>
<dbReference type="GO" id="GO:0008270">
    <property type="term" value="F:zinc ion binding"/>
    <property type="evidence" value="ECO:0007669"/>
    <property type="project" value="UniProtKB-UniRule"/>
</dbReference>
<dbReference type="CDD" id="cd07717">
    <property type="entry name" value="RNaseZ_ZiPD-like_MBL-fold"/>
    <property type="match status" value="1"/>
</dbReference>
<dbReference type="FunFam" id="3.60.15.10:FF:000002">
    <property type="entry name" value="Ribonuclease Z"/>
    <property type="match status" value="1"/>
</dbReference>
<dbReference type="Gene3D" id="3.60.15.10">
    <property type="entry name" value="Ribonuclease Z/Hydroxyacylglutathione hydrolase-like"/>
    <property type="match status" value="1"/>
</dbReference>
<dbReference type="HAMAP" id="MF_01818">
    <property type="entry name" value="RNase_Z_BN"/>
    <property type="match status" value="1"/>
</dbReference>
<dbReference type="InterPro" id="IPR001279">
    <property type="entry name" value="Metallo-B-lactamas"/>
</dbReference>
<dbReference type="InterPro" id="IPR036866">
    <property type="entry name" value="RibonucZ/Hydroxyglut_hydro"/>
</dbReference>
<dbReference type="InterPro" id="IPR013471">
    <property type="entry name" value="RNase_Z/BN"/>
</dbReference>
<dbReference type="NCBIfam" id="NF000801">
    <property type="entry name" value="PRK00055.1-3"/>
    <property type="match status" value="1"/>
</dbReference>
<dbReference type="NCBIfam" id="TIGR02651">
    <property type="entry name" value="RNase_Z"/>
    <property type="match status" value="1"/>
</dbReference>
<dbReference type="PANTHER" id="PTHR46018">
    <property type="entry name" value="ZINC PHOSPHODIESTERASE ELAC PROTEIN 1"/>
    <property type="match status" value="1"/>
</dbReference>
<dbReference type="PANTHER" id="PTHR46018:SF2">
    <property type="entry name" value="ZINC PHOSPHODIESTERASE ELAC PROTEIN 1"/>
    <property type="match status" value="1"/>
</dbReference>
<dbReference type="Pfam" id="PF00753">
    <property type="entry name" value="Lactamase_B"/>
    <property type="match status" value="1"/>
</dbReference>
<dbReference type="SUPFAM" id="SSF56281">
    <property type="entry name" value="Metallo-hydrolase/oxidoreductase"/>
    <property type="match status" value="1"/>
</dbReference>
<sequence length="309" mass="34140">MDIQFLGTGAGQPSKARNVSSLALKLLDEINEVWLFDCGEGTQNRILETTIRPRKVSKIFITHLHGDHIFGLPGFLSSRAFQANEEQTDLEIYGPQGIKSFVLTSLRVSGSRLPYRIHFHEFDQDSLGKILETDKFTVYAEELDHTIFCVGYRVMQKDLEGTLDAEKLKAAGVPFGPLFGKIKNGQDLVLEDGTEIKAADYISAPRPGKIITILGDTRKTGASVRLAVNADVLVHESTYGKGDEKIARNHGHSTNMQAAQVAVEAGAKRLLLNHISARFLSKDISKLKKDAATIFENVHVVKDLEEVEI</sequence>
<reference key="1">
    <citation type="journal article" date="2009" name="J. Bacteriol.">
        <title>Role of conjugative elements in the evolution of the multidrug-resistant pandemic clone Streptococcus pneumoniae Spain23F ST81.</title>
        <authorList>
            <person name="Croucher N.J."/>
            <person name="Walker D."/>
            <person name="Romero P."/>
            <person name="Lennard N."/>
            <person name="Paterson G.K."/>
            <person name="Bason N.C."/>
            <person name="Mitchell A.M."/>
            <person name="Quail M.A."/>
            <person name="Andrew P.W."/>
            <person name="Parkhill J."/>
            <person name="Bentley S.D."/>
            <person name="Mitchell T.J."/>
        </authorList>
    </citation>
    <scope>NUCLEOTIDE SEQUENCE [LARGE SCALE GENOMIC DNA]</scope>
    <source>
        <strain>ATCC 700669 / Spain 23F-1</strain>
    </source>
</reference>
<name>RNZ_STRPJ</name>
<accession>B8ZMQ6</accession>
<comment type="function">
    <text evidence="1">Zinc phosphodiesterase, which displays some tRNA 3'-processing endonuclease activity. Probably involved in tRNA maturation, by removing a 3'-trailer from precursor tRNA.</text>
</comment>
<comment type="catalytic activity">
    <reaction evidence="1">
        <text>Endonucleolytic cleavage of RNA, removing extra 3' nucleotides from tRNA precursor, generating 3' termini of tRNAs. A 3'-hydroxy group is left at the tRNA terminus and a 5'-phosphoryl group is left at the trailer molecule.</text>
        <dbReference type="EC" id="3.1.26.11"/>
    </reaction>
</comment>
<comment type="cofactor">
    <cofactor evidence="1">
        <name>Zn(2+)</name>
        <dbReference type="ChEBI" id="CHEBI:29105"/>
    </cofactor>
    <text evidence="1">Binds 2 Zn(2+) ions.</text>
</comment>
<comment type="subunit">
    <text evidence="1">Homodimer.</text>
</comment>
<comment type="similarity">
    <text evidence="1">Belongs to the RNase Z family.</text>
</comment>
<protein>
    <recommendedName>
        <fullName evidence="1">Ribonuclease Z</fullName>
        <shortName evidence="1">RNase Z</shortName>
        <ecNumber evidence="1">3.1.26.11</ecNumber>
    </recommendedName>
    <alternativeName>
        <fullName evidence="1">tRNA 3 endonuclease</fullName>
    </alternativeName>
    <alternativeName>
        <fullName evidence="1">tRNase Z</fullName>
    </alternativeName>
</protein>
<organism>
    <name type="scientific">Streptococcus pneumoniae (strain ATCC 700669 / Spain 23F-1)</name>
    <dbReference type="NCBI Taxonomy" id="561276"/>
    <lineage>
        <taxon>Bacteria</taxon>
        <taxon>Bacillati</taxon>
        <taxon>Bacillota</taxon>
        <taxon>Bacilli</taxon>
        <taxon>Lactobacillales</taxon>
        <taxon>Streptococcaceae</taxon>
        <taxon>Streptococcus</taxon>
    </lineage>
</organism>
<keyword id="KW-0255">Endonuclease</keyword>
<keyword id="KW-0378">Hydrolase</keyword>
<keyword id="KW-0479">Metal-binding</keyword>
<keyword id="KW-0540">Nuclease</keyword>
<keyword id="KW-0819">tRNA processing</keyword>
<keyword id="KW-0862">Zinc</keyword>
<feature type="chain" id="PRO_1000187995" description="Ribonuclease Z">
    <location>
        <begin position="1"/>
        <end position="309"/>
    </location>
</feature>
<feature type="active site" description="Proton acceptor" evidence="1">
    <location>
        <position position="67"/>
    </location>
</feature>
<feature type="binding site" evidence="1">
    <location>
        <position position="63"/>
    </location>
    <ligand>
        <name>Zn(2+)</name>
        <dbReference type="ChEBI" id="CHEBI:29105"/>
        <label>1</label>
        <note>catalytic</note>
    </ligand>
</feature>
<feature type="binding site" evidence="1">
    <location>
        <position position="65"/>
    </location>
    <ligand>
        <name>Zn(2+)</name>
        <dbReference type="ChEBI" id="CHEBI:29105"/>
        <label>1</label>
        <note>catalytic</note>
    </ligand>
</feature>
<feature type="binding site" evidence="1">
    <location>
        <position position="67"/>
    </location>
    <ligand>
        <name>Zn(2+)</name>
        <dbReference type="ChEBI" id="CHEBI:29105"/>
        <label>2</label>
        <note>catalytic</note>
    </ligand>
</feature>
<feature type="binding site" evidence="1">
    <location>
        <position position="68"/>
    </location>
    <ligand>
        <name>Zn(2+)</name>
        <dbReference type="ChEBI" id="CHEBI:29105"/>
        <label>2</label>
        <note>catalytic</note>
    </ligand>
</feature>
<feature type="binding site" evidence="1">
    <location>
        <position position="145"/>
    </location>
    <ligand>
        <name>Zn(2+)</name>
        <dbReference type="ChEBI" id="CHEBI:29105"/>
        <label>1</label>
        <note>catalytic</note>
    </ligand>
</feature>
<feature type="binding site" evidence="1">
    <location>
        <position position="216"/>
    </location>
    <ligand>
        <name>Zn(2+)</name>
        <dbReference type="ChEBI" id="CHEBI:29105"/>
        <label>1</label>
        <note>catalytic</note>
    </ligand>
</feature>
<feature type="binding site" evidence="1">
    <location>
        <position position="216"/>
    </location>
    <ligand>
        <name>Zn(2+)</name>
        <dbReference type="ChEBI" id="CHEBI:29105"/>
        <label>2</label>
        <note>catalytic</note>
    </ligand>
</feature>
<feature type="binding site" evidence="1">
    <location>
        <position position="274"/>
    </location>
    <ligand>
        <name>Zn(2+)</name>
        <dbReference type="ChEBI" id="CHEBI:29105"/>
        <label>2</label>
        <note>catalytic</note>
    </ligand>
</feature>